<dbReference type="EC" id="2.4.2.18" evidence="1"/>
<dbReference type="EMBL" id="CP000879">
    <property type="protein sequence ID" value="ABX31928.1"/>
    <property type="molecule type" value="Genomic_DNA"/>
</dbReference>
<dbReference type="RefSeq" id="WP_012209028.1">
    <property type="nucleotide sequence ID" value="NC_010003.1"/>
</dbReference>
<dbReference type="SMR" id="A9BHQ6"/>
<dbReference type="STRING" id="403833.Pmob_1211"/>
<dbReference type="KEGG" id="pmo:Pmob_1211"/>
<dbReference type="eggNOG" id="COG0547">
    <property type="taxonomic scope" value="Bacteria"/>
</dbReference>
<dbReference type="HOGENOM" id="CLU_034315_2_1_0"/>
<dbReference type="OrthoDB" id="9806430at2"/>
<dbReference type="UniPathway" id="UPA00035">
    <property type="reaction ID" value="UER00041"/>
</dbReference>
<dbReference type="Proteomes" id="UP000000789">
    <property type="component" value="Chromosome"/>
</dbReference>
<dbReference type="GO" id="GO:0005829">
    <property type="term" value="C:cytosol"/>
    <property type="evidence" value="ECO:0007669"/>
    <property type="project" value="TreeGrafter"/>
</dbReference>
<dbReference type="GO" id="GO:0004048">
    <property type="term" value="F:anthranilate phosphoribosyltransferase activity"/>
    <property type="evidence" value="ECO:0007669"/>
    <property type="project" value="UniProtKB-UniRule"/>
</dbReference>
<dbReference type="GO" id="GO:0000287">
    <property type="term" value="F:magnesium ion binding"/>
    <property type="evidence" value="ECO:0007669"/>
    <property type="project" value="UniProtKB-UniRule"/>
</dbReference>
<dbReference type="GO" id="GO:0000162">
    <property type="term" value="P:L-tryptophan biosynthetic process"/>
    <property type="evidence" value="ECO:0007669"/>
    <property type="project" value="UniProtKB-UniRule"/>
</dbReference>
<dbReference type="FunFam" id="3.40.1030.10:FF:000002">
    <property type="entry name" value="Anthranilate phosphoribosyltransferase"/>
    <property type="match status" value="1"/>
</dbReference>
<dbReference type="Gene3D" id="3.40.1030.10">
    <property type="entry name" value="Nucleoside phosphorylase/phosphoribosyltransferase catalytic domain"/>
    <property type="match status" value="1"/>
</dbReference>
<dbReference type="Gene3D" id="1.20.970.10">
    <property type="entry name" value="Transferase, Pyrimidine Nucleoside Phosphorylase, Chain C"/>
    <property type="match status" value="1"/>
</dbReference>
<dbReference type="HAMAP" id="MF_00211">
    <property type="entry name" value="TrpD"/>
    <property type="match status" value="1"/>
</dbReference>
<dbReference type="InterPro" id="IPR005940">
    <property type="entry name" value="Anthranilate_Pribosyl_Tfrase"/>
</dbReference>
<dbReference type="InterPro" id="IPR000312">
    <property type="entry name" value="Glycosyl_Trfase_fam3"/>
</dbReference>
<dbReference type="InterPro" id="IPR017459">
    <property type="entry name" value="Glycosyl_Trfase_fam3_N_dom"/>
</dbReference>
<dbReference type="InterPro" id="IPR036320">
    <property type="entry name" value="Glycosyl_Trfase_fam3_N_dom_sf"/>
</dbReference>
<dbReference type="InterPro" id="IPR035902">
    <property type="entry name" value="Nuc_phospho_transferase"/>
</dbReference>
<dbReference type="NCBIfam" id="TIGR01245">
    <property type="entry name" value="trpD"/>
    <property type="match status" value="1"/>
</dbReference>
<dbReference type="PANTHER" id="PTHR43285">
    <property type="entry name" value="ANTHRANILATE PHOSPHORIBOSYLTRANSFERASE"/>
    <property type="match status" value="1"/>
</dbReference>
<dbReference type="PANTHER" id="PTHR43285:SF2">
    <property type="entry name" value="ANTHRANILATE PHOSPHORIBOSYLTRANSFERASE"/>
    <property type="match status" value="1"/>
</dbReference>
<dbReference type="Pfam" id="PF02885">
    <property type="entry name" value="Glycos_trans_3N"/>
    <property type="match status" value="1"/>
</dbReference>
<dbReference type="Pfam" id="PF00591">
    <property type="entry name" value="Glycos_transf_3"/>
    <property type="match status" value="1"/>
</dbReference>
<dbReference type="SUPFAM" id="SSF52418">
    <property type="entry name" value="Nucleoside phosphorylase/phosphoribosyltransferase catalytic domain"/>
    <property type="match status" value="1"/>
</dbReference>
<dbReference type="SUPFAM" id="SSF47648">
    <property type="entry name" value="Nucleoside phosphorylase/phosphoribosyltransferase N-terminal domain"/>
    <property type="match status" value="1"/>
</dbReference>
<gene>
    <name evidence="1" type="primary">trpD</name>
    <name type="ordered locus">Pmob_1211</name>
</gene>
<protein>
    <recommendedName>
        <fullName evidence="1">Anthranilate phosphoribosyltransferase</fullName>
        <ecNumber evidence="1">2.4.2.18</ecNumber>
    </recommendedName>
</protein>
<comment type="function">
    <text evidence="1">Catalyzes the transfer of the phosphoribosyl group of 5-phosphorylribose-1-pyrophosphate (PRPP) to anthranilate to yield N-(5'-phosphoribosyl)-anthranilate (PRA).</text>
</comment>
<comment type="catalytic activity">
    <reaction evidence="1">
        <text>N-(5-phospho-beta-D-ribosyl)anthranilate + diphosphate = 5-phospho-alpha-D-ribose 1-diphosphate + anthranilate</text>
        <dbReference type="Rhea" id="RHEA:11768"/>
        <dbReference type="ChEBI" id="CHEBI:16567"/>
        <dbReference type="ChEBI" id="CHEBI:18277"/>
        <dbReference type="ChEBI" id="CHEBI:33019"/>
        <dbReference type="ChEBI" id="CHEBI:58017"/>
        <dbReference type="EC" id="2.4.2.18"/>
    </reaction>
</comment>
<comment type="cofactor">
    <cofactor evidence="1">
        <name>Mg(2+)</name>
        <dbReference type="ChEBI" id="CHEBI:18420"/>
    </cofactor>
    <text evidence="1">Binds 2 magnesium ions per monomer.</text>
</comment>
<comment type="pathway">
    <text evidence="1">Amino-acid biosynthesis; L-tryptophan biosynthesis; L-tryptophan from chorismate: step 2/5.</text>
</comment>
<comment type="subunit">
    <text evidence="1">Homodimer.</text>
</comment>
<comment type="similarity">
    <text evidence="1">Belongs to the anthranilate phosphoribosyltransferase family.</text>
</comment>
<keyword id="KW-0028">Amino-acid biosynthesis</keyword>
<keyword id="KW-0057">Aromatic amino acid biosynthesis</keyword>
<keyword id="KW-0328">Glycosyltransferase</keyword>
<keyword id="KW-0460">Magnesium</keyword>
<keyword id="KW-0479">Metal-binding</keyword>
<keyword id="KW-0808">Transferase</keyword>
<keyword id="KW-0822">Tryptophan biosynthesis</keyword>
<reference key="1">
    <citation type="submission" date="2007-11" db="EMBL/GenBank/DDBJ databases">
        <title>Complete sequence of Petroga mobilis SJ95.</title>
        <authorList>
            <consortium name="US DOE Joint Genome Institute"/>
            <person name="Copeland A."/>
            <person name="Lucas S."/>
            <person name="Lapidus A."/>
            <person name="Barry K."/>
            <person name="Glavina del Rio T."/>
            <person name="Dalin E."/>
            <person name="Tice H."/>
            <person name="Pitluck S."/>
            <person name="Meincke L."/>
            <person name="Brettin T."/>
            <person name="Bruce D."/>
            <person name="Detter J.C."/>
            <person name="Han C."/>
            <person name="Kuske C.R."/>
            <person name="Schmutz J."/>
            <person name="Larimer F."/>
            <person name="Land M."/>
            <person name="Hauser L."/>
            <person name="Kyrpides N."/>
            <person name="Mikhailova N."/>
            <person name="Noll K."/>
            <person name="Richardson P."/>
        </authorList>
    </citation>
    <scope>NUCLEOTIDE SEQUENCE [LARGE SCALE GENOMIC DNA]</scope>
    <source>
        <strain>DSM 10674 / SJ95</strain>
    </source>
</reference>
<accession>A9BHQ6</accession>
<proteinExistence type="inferred from homology"/>
<name>TRPD_PETMO</name>
<evidence type="ECO:0000255" key="1">
    <source>
        <dbReference type="HAMAP-Rule" id="MF_00211"/>
    </source>
</evidence>
<feature type="chain" id="PRO_1000078021" description="Anthranilate phosphoribosyltransferase">
    <location>
        <begin position="1"/>
        <end position="344"/>
    </location>
</feature>
<feature type="binding site" evidence="1">
    <location>
        <position position="80"/>
    </location>
    <ligand>
        <name>5-phospho-alpha-D-ribose 1-diphosphate</name>
        <dbReference type="ChEBI" id="CHEBI:58017"/>
    </ligand>
</feature>
<feature type="binding site" evidence="1">
    <location>
        <position position="80"/>
    </location>
    <ligand>
        <name>anthranilate</name>
        <dbReference type="ChEBI" id="CHEBI:16567"/>
        <label>1</label>
    </ligand>
</feature>
<feature type="binding site" evidence="1">
    <location>
        <begin position="83"/>
        <end position="84"/>
    </location>
    <ligand>
        <name>5-phospho-alpha-D-ribose 1-diphosphate</name>
        <dbReference type="ChEBI" id="CHEBI:58017"/>
    </ligand>
</feature>
<feature type="binding site" evidence="1">
    <location>
        <position position="88"/>
    </location>
    <ligand>
        <name>5-phospho-alpha-D-ribose 1-diphosphate</name>
        <dbReference type="ChEBI" id="CHEBI:58017"/>
    </ligand>
</feature>
<feature type="binding site" evidence="1">
    <location>
        <begin position="90"/>
        <end position="93"/>
    </location>
    <ligand>
        <name>5-phospho-alpha-D-ribose 1-diphosphate</name>
        <dbReference type="ChEBI" id="CHEBI:58017"/>
    </ligand>
</feature>
<feature type="binding site" evidence="1">
    <location>
        <position position="92"/>
    </location>
    <ligand>
        <name>Mg(2+)</name>
        <dbReference type="ChEBI" id="CHEBI:18420"/>
        <label>1</label>
    </ligand>
</feature>
<feature type="binding site" evidence="1">
    <location>
        <begin position="108"/>
        <end position="116"/>
    </location>
    <ligand>
        <name>5-phospho-alpha-D-ribose 1-diphosphate</name>
        <dbReference type="ChEBI" id="CHEBI:58017"/>
    </ligand>
</feature>
<feature type="binding site" evidence="1">
    <location>
        <position position="111"/>
    </location>
    <ligand>
        <name>anthranilate</name>
        <dbReference type="ChEBI" id="CHEBI:16567"/>
        <label>1</label>
    </ligand>
</feature>
<feature type="binding site" evidence="1">
    <location>
        <position position="120"/>
    </location>
    <ligand>
        <name>5-phospho-alpha-D-ribose 1-diphosphate</name>
        <dbReference type="ChEBI" id="CHEBI:58017"/>
    </ligand>
</feature>
<feature type="binding site" evidence="1">
    <location>
        <position position="166"/>
    </location>
    <ligand>
        <name>anthranilate</name>
        <dbReference type="ChEBI" id="CHEBI:16567"/>
        <label>2</label>
    </ligand>
</feature>
<feature type="binding site" evidence="1">
    <location>
        <position position="225"/>
    </location>
    <ligand>
        <name>Mg(2+)</name>
        <dbReference type="ChEBI" id="CHEBI:18420"/>
        <label>2</label>
    </ligand>
</feature>
<feature type="binding site" evidence="1">
    <location>
        <position position="226"/>
    </location>
    <ligand>
        <name>Mg(2+)</name>
        <dbReference type="ChEBI" id="CHEBI:18420"/>
        <label>1</label>
    </ligand>
</feature>
<feature type="binding site" evidence="1">
    <location>
        <position position="226"/>
    </location>
    <ligand>
        <name>Mg(2+)</name>
        <dbReference type="ChEBI" id="CHEBI:18420"/>
        <label>2</label>
    </ligand>
</feature>
<organism>
    <name type="scientific">Petrotoga mobilis (strain DSM 10674 / SJ95)</name>
    <dbReference type="NCBI Taxonomy" id="403833"/>
    <lineage>
        <taxon>Bacteria</taxon>
        <taxon>Thermotogati</taxon>
        <taxon>Thermotogota</taxon>
        <taxon>Thermotogae</taxon>
        <taxon>Petrotogales</taxon>
        <taxon>Petrotogaceae</taxon>
        <taxon>Petrotoga</taxon>
    </lineage>
</organism>
<sequence>MFNYYLQKVVKGENLSLDEMEQAMEMIMEGKVTHSQLSGFLVALHMKGETVEEITASAKVMKEKATPISIESGELMDTCGTGGDAKGTFNISTAVAFILAAAGVVVAKHGNRSVSSKSGSADVLESLGINISLPPSSVERCLKEINIAFLFAQDFHKATKHAAVPRKELGIRTIFNVLGPLTNPANIKYQLMGIYDPKLVYPIAEVLNNLGVKRAMVVHGSEGIDEFSLSGKNKVAFLNEGKIEKLEISPEDLGLEKYSIQEIQGGSAEENKRIILNIFNGEMGPKRDVVVLNTAAGLYVANKVNSLEEGINFAQEIIDSGKAMKKLEEMVEFTNFLSLQAKTS</sequence>